<name>RL9_MYCVP</name>
<keyword id="KW-0687">Ribonucleoprotein</keyword>
<keyword id="KW-0689">Ribosomal protein</keyword>
<keyword id="KW-0694">RNA-binding</keyword>
<keyword id="KW-0699">rRNA-binding</keyword>
<proteinExistence type="inferred from homology"/>
<gene>
    <name evidence="1" type="primary">rplI</name>
    <name type="ordered locus">Mvan_6031</name>
</gene>
<accession>A1THY4</accession>
<evidence type="ECO:0000255" key="1">
    <source>
        <dbReference type="HAMAP-Rule" id="MF_00503"/>
    </source>
</evidence>
<evidence type="ECO:0000305" key="2"/>
<comment type="function">
    <text evidence="1">Binds to the 23S rRNA.</text>
</comment>
<comment type="similarity">
    <text evidence="1">Belongs to the bacterial ribosomal protein bL9 family.</text>
</comment>
<dbReference type="EMBL" id="CP000511">
    <property type="protein sequence ID" value="ABM16784.1"/>
    <property type="molecule type" value="Genomic_DNA"/>
</dbReference>
<dbReference type="RefSeq" id="WP_011783128.1">
    <property type="nucleotide sequence ID" value="NZ_JACKSD010000057.1"/>
</dbReference>
<dbReference type="SMR" id="A1THY4"/>
<dbReference type="STRING" id="350058.Mvan_6031"/>
<dbReference type="KEGG" id="mva:Mvan_6031"/>
<dbReference type="eggNOG" id="COG0359">
    <property type="taxonomic scope" value="Bacteria"/>
</dbReference>
<dbReference type="HOGENOM" id="CLU_078938_5_1_11"/>
<dbReference type="Proteomes" id="UP000009159">
    <property type="component" value="Chromosome"/>
</dbReference>
<dbReference type="GO" id="GO:1990904">
    <property type="term" value="C:ribonucleoprotein complex"/>
    <property type="evidence" value="ECO:0007669"/>
    <property type="project" value="UniProtKB-KW"/>
</dbReference>
<dbReference type="GO" id="GO:0005840">
    <property type="term" value="C:ribosome"/>
    <property type="evidence" value="ECO:0007669"/>
    <property type="project" value="UniProtKB-KW"/>
</dbReference>
<dbReference type="GO" id="GO:0019843">
    <property type="term" value="F:rRNA binding"/>
    <property type="evidence" value="ECO:0007669"/>
    <property type="project" value="UniProtKB-UniRule"/>
</dbReference>
<dbReference type="GO" id="GO:0003735">
    <property type="term" value="F:structural constituent of ribosome"/>
    <property type="evidence" value="ECO:0007669"/>
    <property type="project" value="InterPro"/>
</dbReference>
<dbReference type="GO" id="GO:0006412">
    <property type="term" value="P:translation"/>
    <property type="evidence" value="ECO:0007669"/>
    <property type="project" value="UniProtKB-UniRule"/>
</dbReference>
<dbReference type="FunFam" id="3.10.430.100:FF:000006">
    <property type="entry name" value="50S ribosomal protein L9"/>
    <property type="match status" value="1"/>
</dbReference>
<dbReference type="FunFam" id="3.40.5.10:FF:000003">
    <property type="entry name" value="50S ribosomal protein L9"/>
    <property type="match status" value="1"/>
</dbReference>
<dbReference type="Gene3D" id="3.10.430.100">
    <property type="entry name" value="Ribosomal protein L9, C-terminal domain"/>
    <property type="match status" value="1"/>
</dbReference>
<dbReference type="Gene3D" id="3.40.5.10">
    <property type="entry name" value="Ribosomal protein L9, N-terminal domain"/>
    <property type="match status" value="1"/>
</dbReference>
<dbReference type="HAMAP" id="MF_00503">
    <property type="entry name" value="Ribosomal_bL9"/>
    <property type="match status" value="1"/>
</dbReference>
<dbReference type="InterPro" id="IPR000244">
    <property type="entry name" value="Ribosomal_bL9"/>
</dbReference>
<dbReference type="InterPro" id="IPR009027">
    <property type="entry name" value="Ribosomal_bL9/RNase_H1_N"/>
</dbReference>
<dbReference type="InterPro" id="IPR020594">
    <property type="entry name" value="Ribosomal_bL9_bac/chp"/>
</dbReference>
<dbReference type="InterPro" id="IPR020069">
    <property type="entry name" value="Ribosomal_bL9_C"/>
</dbReference>
<dbReference type="InterPro" id="IPR036791">
    <property type="entry name" value="Ribosomal_bL9_C_sf"/>
</dbReference>
<dbReference type="InterPro" id="IPR020070">
    <property type="entry name" value="Ribosomal_bL9_N"/>
</dbReference>
<dbReference type="InterPro" id="IPR036935">
    <property type="entry name" value="Ribosomal_bL9_N_sf"/>
</dbReference>
<dbReference type="NCBIfam" id="TIGR00158">
    <property type="entry name" value="L9"/>
    <property type="match status" value="1"/>
</dbReference>
<dbReference type="PANTHER" id="PTHR21368">
    <property type="entry name" value="50S RIBOSOMAL PROTEIN L9"/>
    <property type="match status" value="1"/>
</dbReference>
<dbReference type="Pfam" id="PF03948">
    <property type="entry name" value="Ribosomal_L9_C"/>
    <property type="match status" value="1"/>
</dbReference>
<dbReference type="Pfam" id="PF01281">
    <property type="entry name" value="Ribosomal_L9_N"/>
    <property type="match status" value="1"/>
</dbReference>
<dbReference type="SUPFAM" id="SSF55658">
    <property type="entry name" value="L9 N-domain-like"/>
    <property type="match status" value="1"/>
</dbReference>
<dbReference type="SUPFAM" id="SSF55653">
    <property type="entry name" value="Ribosomal protein L9 C-domain"/>
    <property type="match status" value="1"/>
</dbReference>
<dbReference type="PROSITE" id="PS00651">
    <property type="entry name" value="RIBOSOMAL_L9"/>
    <property type="match status" value="1"/>
</dbReference>
<feature type="chain" id="PRO_1000014817" description="Large ribosomal subunit protein bL9">
    <location>
        <begin position="1"/>
        <end position="151"/>
    </location>
</feature>
<reference key="1">
    <citation type="submission" date="2006-12" db="EMBL/GenBank/DDBJ databases">
        <title>Complete sequence of Mycobacterium vanbaalenii PYR-1.</title>
        <authorList>
            <consortium name="US DOE Joint Genome Institute"/>
            <person name="Copeland A."/>
            <person name="Lucas S."/>
            <person name="Lapidus A."/>
            <person name="Barry K."/>
            <person name="Detter J.C."/>
            <person name="Glavina del Rio T."/>
            <person name="Hammon N."/>
            <person name="Israni S."/>
            <person name="Dalin E."/>
            <person name="Tice H."/>
            <person name="Pitluck S."/>
            <person name="Singan V."/>
            <person name="Schmutz J."/>
            <person name="Larimer F."/>
            <person name="Land M."/>
            <person name="Hauser L."/>
            <person name="Kyrpides N."/>
            <person name="Anderson I.J."/>
            <person name="Miller C."/>
            <person name="Richardson P."/>
        </authorList>
    </citation>
    <scope>NUCLEOTIDE SEQUENCE [LARGE SCALE GENOMIC DNA]</scope>
    <source>
        <strain>DSM 7251 / JCM 13017 / BCRC 16820 / KCTC 9966 / NRRL B-24157 / PYR-1</strain>
    </source>
</reference>
<protein>
    <recommendedName>
        <fullName evidence="1">Large ribosomal subunit protein bL9</fullName>
    </recommendedName>
    <alternativeName>
        <fullName evidence="2">50S ribosomal protein L9</fullName>
    </alternativeName>
</protein>
<sequence>MKLILTAEVEHLGVPGDAVEVKDGYGRNYLLPRGLAIVATRGAQRQADDIRRAQELKSVKGLEHANELKQAIEGLESVELAVKTAADSGKLFGSVTAADVVAAIKKAGGPNLDKRTIGLPKAHIKTTGAHDIAVRLHPEVTAALSLNVVAG</sequence>
<organism>
    <name type="scientific">Mycolicibacterium vanbaalenii (strain DSM 7251 / JCM 13017 / BCRC 16820 / KCTC 9966 / NRRL B-24157 / PYR-1)</name>
    <name type="common">Mycobacterium vanbaalenii</name>
    <dbReference type="NCBI Taxonomy" id="350058"/>
    <lineage>
        <taxon>Bacteria</taxon>
        <taxon>Bacillati</taxon>
        <taxon>Actinomycetota</taxon>
        <taxon>Actinomycetes</taxon>
        <taxon>Mycobacteriales</taxon>
        <taxon>Mycobacteriaceae</taxon>
        <taxon>Mycolicibacterium</taxon>
    </lineage>
</organism>